<name>VP7_ROT46</name>
<keyword id="KW-0024">Alternative initiation</keyword>
<keyword id="KW-0106">Calcium</keyword>
<keyword id="KW-0167">Capsid protein</keyword>
<keyword id="KW-1015">Disulfide bond</keyword>
<keyword id="KW-0325">Glycoprotein</keyword>
<keyword id="KW-1038">Host endoplasmic reticulum</keyword>
<keyword id="KW-0945">Host-virus interaction</keyword>
<keyword id="KW-0479">Metal-binding</keyword>
<keyword id="KW-1152">Outer capsid protein</keyword>
<keyword id="KW-0732">Signal</keyword>
<keyword id="KW-1146">T=13 icosahedral capsid protein</keyword>
<keyword id="KW-0946">Virion</keyword>
<dbReference type="EMBL" id="L35054">
    <property type="protein sequence ID" value="AAA47088.1"/>
    <property type="molecule type" value="mRNA"/>
</dbReference>
<dbReference type="SMR" id="Q85031"/>
<dbReference type="GO" id="GO:0044166">
    <property type="term" value="C:host cell endoplasmic reticulum lumen"/>
    <property type="evidence" value="ECO:0007669"/>
    <property type="project" value="UniProtKB-SubCell"/>
</dbReference>
<dbReference type="GO" id="GO:0039621">
    <property type="term" value="C:T=13 icosahedral viral capsid"/>
    <property type="evidence" value="ECO:0007669"/>
    <property type="project" value="UniProtKB-UniRule"/>
</dbReference>
<dbReference type="GO" id="GO:0039624">
    <property type="term" value="C:viral outer capsid"/>
    <property type="evidence" value="ECO:0007669"/>
    <property type="project" value="UniProtKB-UniRule"/>
</dbReference>
<dbReference type="GO" id="GO:0046872">
    <property type="term" value="F:metal ion binding"/>
    <property type="evidence" value="ECO:0007669"/>
    <property type="project" value="UniProtKB-KW"/>
</dbReference>
<dbReference type="Gene3D" id="3.40.50.11130">
    <property type="entry name" value="Glycoprotein VP7, domain 1"/>
    <property type="match status" value="1"/>
</dbReference>
<dbReference type="Gene3D" id="2.60.120.800">
    <property type="entry name" value="Rotavirus outer-layer protein VP7, domain 2"/>
    <property type="match status" value="1"/>
</dbReference>
<dbReference type="HAMAP" id="MF_04130">
    <property type="entry name" value="Rota_VP7"/>
    <property type="match status" value="1"/>
</dbReference>
<dbReference type="HAMAP" id="MF_04131">
    <property type="entry name" value="Rota_VP7_A"/>
    <property type="match status" value="1"/>
</dbReference>
<dbReference type="InterPro" id="IPR001963">
    <property type="entry name" value="VP7"/>
</dbReference>
<dbReference type="InterPro" id="IPR042207">
    <property type="entry name" value="VP7_1"/>
</dbReference>
<dbReference type="InterPro" id="IPR042210">
    <property type="entry name" value="VP7_2"/>
</dbReference>
<dbReference type="Pfam" id="PF00434">
    <property type="entry name" value="VP7"/>
    <property type="match status" value="1"/>
</dbReference>
<protein>
    <recommendedName>
        <fullName evidence="2">Outer capsid glycoprotein VP7</fullName>
    </recommendedName>
</protein>
<feature type="signal peptide" evidence="2">
    <location>
        <begin position="1"/>
        <end position="50"/>
    </location>
</feature>
<feature type="chain" id="PRO_0000369106" description="Outer capsid glycoprotein VP7" evidence="2">
    <location>
        <begin position="51"/>
        <end position="326"/>
    </location>
</feature>
<feature type="region of interest" description="CNP motif; interaction with ITGAV/ITGB3" evidence="2">
    <location>
        <begin position="165"/>
        <end position="167"/>
    </location>
</feature>
<feature type="region of interest" description="LVD motif; interaction with ITGA4/ITGB1 heterodimer" evidence="2">
    <location>
        <begin position="237"/>
        <end position="239"/>
    </location>
</feature>
<feature type="region of interest" description="GPR motif; interaction with ITGAX/ITGB2" evidence="2">
    <location>
        <begin position="253"/>
        <end position="255"/>
    </location>
</feature>
<feature type="binding site" evidence="2">
    <location>
        <position position="95"/>
    </location>
    <ligand>
        <name>Ca(2+)</name>
        <dbReference type="ChEBI" id="CHEBI:29108"/>
        <label>1</label>
    </ligand>
</feature>
<feature type="binding site" evidence="2">
    <location>
        <position position="177"/>
    </location>
    <ligand>
        <name>Ca(2+)</name>
        <dbReference type="ChEBI" id="CHEBI:29108"/>
        <label>2</label>
    </ligand>
</feature>
<feature type="binding site" evidence="2">
    <location>
        <position position="206"/>
    </location>
    <ligand>
        <name>Ca(2+)</name>
        <dbReference type="ChEBI" id="CHEBI:29108"/>
        <label>1</label>
    </ligand>
</feature>
<feature type="binding site" evidence="2">
    <location>
        <position position="214"/>
    </location>
    <ligand>
        <name>Ca(2+)</name>
        <dbReference type="ChEBI" id="CHEBI:29108"/>
        <label>1</label>
    </ligand>
</feature>
<feature type="binding site" evidence="2">
    <location>
        <position position="216"/>
    </location>
    <ligand>
        <name>Ca(2+)</name>
        <dbReference type="ChEBI" id="CHEBI:29108"/>
        <label>1</label>
    </ligand>
</feature>
<feature type="binding site" evidence="2">
    <location>
        <position position="228"/>
    </location>
    <ligand>
        <name>Ca(2+)</name>
        <dbReference type="ChEBI" id="CHEBI:29108"/>
        <label>2</label>
    </ligand>
</feature>
<feature type="binding site" evidence="2">
    <location>
        <position position="229"/>
    </location>
    <ligand>
        <name>Ca(2+)</name>
        <dbReference type="ChEBI" id="CHEBI:29108"/>
        <label>2</label>
    </ligand>
</feature>
<feature type="binding site" evidence="2">
    <location>
        <position position="231"/>
    </location>
    <ligand>
        <name>Ca(2+)</name>
        <dbReference type="ChEBI" id="CHEBI:29108"/>
        <label>2</label>
    </ligand>
</feature>
<feature type="binding site" evidence="2">
    <location>
        <position position="301"/>
    </location>
    <ligand>
        <name>Ca(2+)</name>
        <dbReference type="ChEBI" id="CHEBI:29108"/>
        <label>2</label>
    </ligand>
</feature>
<feature type="glycosylation site" description="N-linked (GlcNAc...) asparagine; by host" evidence="1">
    <location>
        <position position="69"/>
    </location>
</feature>
<feature type="disulfide bond" evidence="2">
    <location>
        <begin position="82"/>
        <end position="135"/>
    </location>
</feature>
<feature type="disulfide bond" evidence="2">
    <location>
        <begin position="165"/>
        <end position="249"/>
    </location>
</feature>
<feature type="disulfide bond" evidence="2">
    <location>
        <begin position="191"/>
        <end position="244"/>
    </location>
</feature>
<feature type="disulfide bond" evidence="2">
    <location>
        <begin position="196"/>
        <end position="207"/>
    </location>
</feature>
<feature type="splice variant" id="VSP_038609" description="In isoform 2." evidence="3">
    <location>
        <begin position="1"/>
        <end position="29"/>
    </location>
</feature>
<organismHost>
    <name type="scientific">Sus scrofa</name>
    <name type="common">Pig</name>
    <dbReference type="NCBI Taxonomy" id="9823"/>
</organismHost>
<sequence>MYGIEYTTVLTFLISLVFVNYILKSVTRAMDFIIYRFLLVIILLAPFIKTQNYGINLPITGSMDTPYMNSTTSETFLTSTLCLYYPNEAATEIADTKWTETLSQLFLTKGWPTGSVYFKGYADIASFSVEPQLYCDYNIVLMKYDGNLQLDMSELADLILNEWLCNPMDITLYYYQQTDEANKWISMGTSCTIKVCPLNTQTLGIGCSTTDINSFEIVANAEKLAITDVVDGVNHKLDVTTNTCTIRNCKKLGPRENVAVIQVGGPNILDITADPTTAPQTERMMRINWKRWWQVFYTIVDYVNQIVQVMSKRSRSLNSAAFYYRV</sequence>
<comment type="function">
    <text evidence="2">Calcium-binding protein that interacts with rotavirus cell receptors once the initial attachment by VP4 has been achieved. Rotavirus attachment and entry into the host cell probably involves multiple sequential contacts between the outer capsid proteins VP4 and VP7, and the cell receptors. Following entry into the host cell, low intracellular or intravesicular Ca(2+) concentration probably causes the calcium-stabilized VP7 trimers to dissociate from the virion. This step is probably necessary for the membrane-disrupting entry step and the release of VP4, which is locked onto the virion by VP7.</text>
</comment>
<comment type="subunit">
    <text evidence="2">Homotrimer; disulfide-linked. 2 Ca(2+) ions bound at each subunit interface in the trimer hold the trimer together. Interacts with the intermediate capsid protein VP6. Interacts with the outer capsid protein VP5*.</text>
</comment>
<comment type="subcellular location">
    <subcellularLocation>
        <location evidence="2">Virion</location>
    </subcellularLocation>
    <subcellularLocation>
        <location evidence="2">Host endoplasmic reticulum lumen</location>
    </subcellularLocation>
    <text evidence="2">The outer layer contains 780 copies of VP7, grouped as 260 trimers. Immature double-layered particles assembled in the cytoplasm bud across the membrane of the endoplasmic reticulum, acquiring during this process a transient lipid membrane that is modified with the ER resident viral glycoproteins NSP4 and VP7; these enveloped particles also contain VP4. As the particles move towards the interior of the ER cisternae, the transient lipid membrane and the non-structural protein NSP4 are lost, while the virus surface proteins VP4 and VP7 rearrange to form the outermost virus protein layer, yielding mature infectious triple-layered particles.</text>
</comment>
<comment type="alternative products">
    <event type="alternative initiation"/>
    <isoform>
        <id>Q85031-1</id>
        <name>1</name>
        <sequence type="displayed"/>
    </isoform>
    <isoform>
        <id>Q85031-2</id>
        <name>2</name>
        <sequence type="described" ref="VSP_038609"/>
    </isoform>
</comment>
<comment type="PTM">
    <text evidence="2">N-glycosylated.</text>
</comment>
<comment type="PTM">
    <text evidence="2">The N-terminus is blocked possibly by pyroglutamic acid.</text>
</comment>
<comment type="miscellaneous">
    <text evidence="2">Some rotavirus strains are neuraminidase-sensitive and require sialic acid to attach to the cell surface. Some rotavirus strains are integrin-dependent. Some rotavirus strains depend on ganglioside for their entry into the host cell. Hsp70 also seems to be involved in the entry of some strains.</text>
</comment>
<comment type="miscellaneous">
    <text evidence="2">In group A rotaviruses, VP7 defines the G serotype.</text>
</comment>
<comment type="miscellaneous">
    <molecule>Isoform 2</molecule>
    <text evidence="3">Produced by alternative initiation at Met-30 of isoform 1.</text>
</comment>
<comment type="similarity">
    <text evidence="2">Belongs to the rotavirus VP7 family.</text>
</comment>
<evidence type="ECO:0000255" key="1"/>
<evidence type="ECO:0000255" key="2">
    <source>
        <dbReference type="HAMAP-Rule" id="MF_04131"/>
    </source>
</evidence>
<evidence type="ECO:0000305" key="3"/>
<reference key="1">
    <citation type="journal article" date="1995" name="Arch. Virol.">
        <title>Comparative amino acid sequence analysis of the major outer capsid protein (VP7) of porcine rotaviruses with G3 and G5 serotype specificities isolated in Venezuela and Argentina.</title>
        <authorList>
            <person name="Ciarlet M."/>
            <person name="Ludert J.E."/>
            <person name="Liprandi F."/>
        </authorList>
    </citation>
    <scope>NUCLEOTIDE SEQUENCE [MRNA]</scope>
</reference>
<accession>Q85031</accession>
<proteinExistence type="evidence at transcript level"/>
<organism>
    <name type="scientific">Rotavirus A (isolate RVA/Pig/Venezuela/A46/1985/G5P13[13])</name>
    <name type="common">RV-A</name>
    <dbReference type="NCBI Taxonomy" id="578841"/>
    <lineage>
        <taxon>Viruses</taxon>
        <taxon>Riboviria</taxon>
        <taxon>Orthornavirae</taxon>
        <taxon>Duplornaviricota</taxon>
        <taxon>Resentoviricetes</taxon>
        <taxon>Reovirales</taxon>
        <taxon>Sedoreoviridae</taxon>
        <taxon>Rotavirus</taxon>
        <taxon>Rotavirus A</taxon>
    </lineage>
</organism>